<keyword id="KW-0378">Hydrolase</keyword>
<keyword id="KW-1185">Reference proteome</keyword>
<protein>
    <recommendedName>
        <fullName evidence="1">RNA pyrophosphohydrolase</fullName>
        <ecNumber evidence="1">3.6.1.-</ecNumber>
    </recommendedName>
    <alternativeName>
        <fullName evidence="1">(Di)nucleoside polyphosphate hydrolase</fullName>
    </alternativeName>
</protein>
<dbReference type="EC" id="3.6.1.-" evidence="1"/>
<dbReference type="EMBL" id="AE009442">
    <property type="protein sequence ID" value="AAO29514.1"/>
    <property type="molecule type" value="Genomic_DNA"/>
</dbReference>
<dbReference type="RefSeq" id="WP_004089873.1">
    <property type="nucleotide sequence ID" value="NC_004556.1"/>
</dbReference>
<dbReference type="SMR" id="Q87AY7"/>
<dbReference type="KEGG" id="xft:PD_1674"/>
<dbReference type="HOGENOM" id="CLU_087195_3_1_6"/>
<dbReference type="Proteomes" id="UP000002516">
    <property type="component" value="Chromosome"/>
</dbReference>
<dbReference type="GO" id="GO:0016462">
    <property type="term" value="F:pyrophosphatase activity"/>
    <property type="evidence" value="ECO:0007669"/>
    <property type="project" value="UniProtKB-ARBA"/>
</dbReference>
<dbReference type="CDD" id="cd03671">
    <property type="entry name" value="NUDIX_Ap4A_hydrolase_plant_like"/>
    <property type="match status" value="1"/>
</dbReference>
<dbReference type="FunFam" id="3.90.79.10:FF:000001">
    <property type="entry name" value="RNA pyrophosphohydrolase"/>
    <property type="match status" value="1"/>
</dbReference>
<dbReference type="Gene3D" id="3.90.79.10">
    <property type="entry name" value="Nucleoside Triphosphate Pyrophosphohydrolase"/>
    <property type="match status" value="1"/>
</dbReference>
<dbReference type="HAMAP" id="MF_00298">
    <property type="entry name" value="Nudix_RppH"/>
    <property type="match status" value="1"/>
</dbReference>
<dbReference type="InterPro" id="IPR015797">
    <property type="entry name" value="NUDIX_hydrolase-like_dom_sf"/>
</dbReference>
<dbReference type="InterPro" id="IPR020084">
    <property type="entry name" value="NUDIX_hydrolase_CS"/>
</dbReference>
<dbReference type="InterPro" id="IPR000086">
    <property type="entry name" value="NUDIX_hydrolase_dom"/>
</dbReference>
<dbReference type="InterPro" id="IPR022927">
    <property type="entry name" value="RppH"/>
</dbReference>
<dbReference type="NCBIfam" id="NF001937">
    <property type="entry name" value="PRK00714.1-4"/>
    <property type="match status" value="1"/>
</dbReference>
<dbReference type="NCBIfam" id="NF001938">
    <property type="entry name" value="PRK00714.1-5"/>
    <property type="match status" value="1"/>
</dbReference>
<dbReference type="PANTHER" id="PTHR43736">
    <property type="entry name" value="ADP-RIBOSE PYROPHOSPHATASE"/>
    <property type="match status" value="1"/>
</dbReference>
<dbReference type="PANTHER" id="PTHR43736:SF1">
    <property type="entry name" value="DIHYDRONEOPTERIN TRIPHOSPHATE DIPHOSPHATASE"/>
    <property type="match status" value="1"/>
</dbReference>
<dbReference type="Pfam" id="PF00293">
    <property type="entry name" value="NUDIX"/>
    <property type="match status" value="1"/>
</dbReference>
<dbReference type="SUPFAM" id="SSF55811">
    <property type="entry name" value="Nudix"/>
    <property type="match status" value="1"/>
</dbReference>
<dbReference type="PROSITE" id="PS51462">
    <property type="entry name" value="NUDIX"/>
    <property type="match status" value="1"/>
</dbReference>
<dbReference type="PROSITE" id="PS00893">
    <property type="entry name" value="NUDIX_BOX"/>
    <property type="match status" value="1"/>
</dbReference>
<reference key="1">
    <citation type="journal article" date="2003" name="J. Bacteriol.">
        <title>Comparative analyses of the complete genome sequences of Pierce's disease and citrus variegated chlorosis strains of Xylella fastidiosa.</title>
        <authorList>
            <person name="Van Sluys M.A."/>
            <person name="de Oliveira M.C."/>
            <person name="Monteiro-Vitorello C.B."/>
            <person name="Miyaki C.Y."/>
            <person name="Furlan L.R."/>
            <person name="Camargo L.E.A."/>
            <person name="da Silva A.C.R."/>
            <person name="Moon D.H."/>
            <person name="Takita M.A."/>
            <person name="Lemos E.G.M."/>
            <person name="Machado M.A."/>
            <person name="Ferro M.I.T."/>
            <person name="da Silva F.R."/>
            <person name="Goldman M.H.S."/>
            <person name="Goldman G.H."/>
            <person name="Lemos M.V.F."/>
            <person name="El-Dorry H."/>
            <person name="Tsai S.M."/>
            <person name="Carrer H."/>
            <person name="Carraro D.M."/>
            <person name="de Oliveira R.C."/>
            <person name="Nunes L.R."/>
            <person name="Siqueira W.J."/>
            <person name="Coutinho L.L."/>
            <person name="Kimura E.T."/>
            <person name="Ferro E.S."/>
            <person name="Harakava R."/>
            <person name="Kuramae E.E."/>
            <person name="Marino C.L."/>
            <person name="Giglioti E."/>
            <person name="Abreu I.L."/>
            <person name="Alves L.M.C."/>
            <person name="do Amaral A.M."/>
            <person name="Baia G.S."/>
            <person name="Blanco S.R."/>
            <person name="Brito M.S."/>
            <person name="Cannavan F.S."/>
            <person name="Celestino A.V."/>
            <person name="da Cunha A.F."/>
            <person name="Fenille R.C."/>
            <person name="Ferro J.A."/>
            <person name="Formighieri E.F."/>
            <person name="Kishi L.T."/>
            <person name="Leoni S.G."/>
            <person name="Oliveira A.R."/>
            <person name="Rosa V.E. Jr."/>
            <person name="Sassaki F.T."/>
            <person name="Sena J.A.D."/>
            <person name="de Souza A.A."/>
            <person name="Truffi D."/>
            <person name="Tsukumo F."/>
            <person name="Yanai G.M."/>
            <person name="Zaros L.G."/>
            <person name="Civerolo E.L."/>
            <person name="Simpson A.J.G."/>
            <person name="Almeida N.F. Jr."/>
            <person name="Setubal J.C."/>
            <person name="Kitajima J.P."/>
        </authorList>
    </citation>
    <scope>NUCLEOTIDE SEQUENCE [LARGE SCALE GENOMIC DNA]</scope>
    <source>
        <strain>Temecula1 / ATCC 700964</strain>
    </source>
</reference>
<organism>
    <name type="scientific">Xylella fastidiosa (strain Temecula1 / ATCC 700964)</name>
    <dbReference type="NCBI Taxonomy" id="183190"/>
    <lineage>
        <taxon>Bacteria</taxon>
        <taxon>Pseudomonadati</taxon>
        <taxon>Pseudomonadota</taxon>
        <taxon>Gammaproteobacteria</taxon>
        <taxon>Lysobacterales</taxon>
        <taxon>Lysobacteraceae</taxon>
        <taxon>Xylella</taxon>
    </lineage>
</organism>
<name>RPPH_XYLFT</name>
<accession>Q87AY7</accession>
<sequence length="190" mass="22214">MIDPDGYRPNVGIVLIRRDGQVFWGRRVRRDGWQFPQGGMHSDETPVEAMYRELNEETGLLPEHVQLVGATPGWLRYRLPSQAVRCNRSQMCIGQKQVWFLLQLIGDESHVQLDQSENPEFDHWRWVSFWYPIEHVVMFKRSVYARALCQLASLAQQVVGLEVGTMPQYVQDICLLNVGYKHLPNWVSRY</sequence>
<comment type="function">
    <text evidence="1">Accelerates the degradation of transcripts by removing pyrophosphate from the 5'-end of triphosphorylated RNA, leading to a more labile monophosphorylated state that can stimulate subsequent ribonuclease cleavage.</text>
</comment>
<comment type="cofactor">
    <cofactor evidence="1">
        <name>a divalent metal cation</name>
        <dbReference type="ChEBI" id="CHEBI:60240"/>
    </cofactor>
</comment>
<comment type="similarity">
    <text evidence="1">Belongs to the Nudix hydrolase family. RppH subfamily.</text>
</comment>
<gene>
    <name evidence="1" type="primary">rppH</name>
    <name evidence="1" type="synonym">nudH</name>
    <name type="ordered locus">PD_1674</name>
</gene>
<proteinExistence type="inferred from homology"/>
<evidence type="ECO:0000255" key="1">
    <source>
        <dbReference type="HAMAP-Rule" id="MF_00298"/>
    </source>
</evidence>
<feature type="chain" id="PRO_0000057038" description="RNA pyrophosphohydrolase">
    <location>
        <begin position="1"/>
        <end position="190"/>
    </location>
</feature>
<feature type="domain" description="Nudix hydrolase" evidence="1">
    <location>
        <begin position="6"/>
        <end position="149"/>
    </location>
</feature>
<feature type="short sequence motif" description="Nudix box">
    <location>
        <begin position="38"/>
        <end position="59"/>
    </location>
</feature>